<sequence>MKFFIFTCLLAVALAKPKIEQSSSEETIAVSQEVSPNLENICSTACEEPIKNINEVEYVEVPTEIKDQEFYQKVNLLQYLQALYQYPTVMDPWTRAETKAIPFIRTMQYKQEKDATKHTSQKTELTEEEKAFLKYLDEMKQYYQKFVFPQYLKNAHHFQKTMNPWNHVKTIIYQSVPTLRYL</sequence>
<comment type="function">
    <text>Important role in the capacity of milk to transport calcium phosphate.</text>
</comment>
<comment type="subcellular location">
    <subcellularLocation>
        <location>Secreted</location>
    </subcellularLocation>
</comment>
<comment type="tissue specificity">
    <text>Mammary gland specific. Secreted in milk.</text>
</comment>
<comment type="similarity">
    <text evidence="3">Belongs to the alpha-casein family.</text>
</comment>
<dbReference type="EMBL" id="X76909">
    <property type="protein sequence ID" value="CAA54231.1"/>
    <property type="molecule type" value="mRNA"/>
</dbReference>
<dbReference type="PIR" id="S39776">
    <property type="entry name" value="S39776"/>
</dbReference>
<dbReference type="RefSeq" id="NP_001075870.1">
    <property type="nucleotide sequence ID" value="NM_001082401.1"/>
</dbReference>
<dbReference type="SMR" id="P50419"/>
<dbReference type="FunCoup" id="P50419">
    <property type="interactions" value="2"/>
</dbReference>
<dbReference type="Allergome" id="2149">
    <property type="allergen name" value="Ory c 8"/>
</dbReference>
<dbReference type="PaxDb" id="9986-ENSOCUP00000024897"/>
<dbReference type="GeneID" id="100009288"/>
<dbReference type="KEGG" id="ocu:100009288"/>
<dbReference type="CTD" id="282209"/>
<dbReference type="eggNOG" id="ENOG502TDWX">
    <property type="taxonomic scope" value="Eukaryota"/>
</dbReference>
<dbReference type="HOGENOM" id="CLU_121717_0_0_1"/>
<dbReference type="InParanoid" id="P50419"/>
<dbReference type="OMA" id="VMNPWDQ"/>
<dbReference type="OrthoDB" id="9564348at2759"/>
<dbReference type="TreeFam" id="TF339561"/>
<dbReference type="Proteomes" id="UP000001811">
    <property type="component" value="Unplaced"/>
</dbReference>
<dbReference type="GO" id="GO:0005615">
    <property type="term" value="C:extracellular space"/>
    <property type="evidence" value="ECO:0007669"/>
    <property type="project" value="TreeGrafter"/>
</dbReference>
<dbReference type="GO" id="GO:0042803">
    <property type="term" value="F:protein homodimerization activity"/>
    <property type="evidence" value="ECO:0007669"/>
    <property type="project" value="TreeGrafter"/>
</dbReference>
<dbReference type="GO" id="GO:0035375">
    <property type="term" value="F:zymogen binding"/>
    <property type="evidence" value="ECO:0007669"/>
    <property type="project" value="TreeGrafter"/>
</dbReference>
<dbReference type="InterPro" id="IPR011175">
    <property type="entry name" value="Alpha-s2_casein"/>
</dbReference>
<dbReference type="InterPro" id="IPR001588">
    <property type="entry name" value="Casein"/>
</dbReference>
<dbReference type="InterPro" id="IPR031305">
    <property type="entry name" value="Casein_CS"/>
</dbReference>
<dbReference type="PANTHER" id="PTHR16656">
    <property type="entry name" value="ALPHA-S2-CASEIN-LIKE B"/>
    <property type="match status" value="1"/>
</dbReference>
<dbReference type="PANTHER" id="PTHR16656:SF5">
    <property type="entry name" value="ALPHA-S2-CASEIN-LIKE B"/>
    <property type="match status" value="1"/>
</dbReference>
<dbReference type="Pfam" id="PF00363">
    <property type="entry name" value="Casein"/>
    <property type="match status" value="1"/>
</dbReference>
<dbReference type="PIRSF" id="PIRSF002371">
    <property type="entry name" value="Alpha-s2-casein"/>
    <property type="match status" value="1"/>
</dbReference>
<dbReference type="PROSITE" id="PS00306">
    <property type="entry name" value="CASEIN_ALPHA_BETA"/>
    <property type="match status" value="1"/>
</dbReference>
<organism>
    <name type="scientific">Oryctolagus cuniculus</name>
    <name type="common">Rabbit</name>
    <dbReference type="NCBI Taxonomy" id="9986"/>
    <lineage>
        <taxon>Eukaryota</taxon>
        <taxon>Metazoa</taxon>
        <taxon>Chordata</taxon>
        <taxon>Craniata</taxon>
        <taxon>Vertebrata</taxon>
        <taxon>Euteleostomi</taxon>
        <taxon>Mammalia</taxon>
        <taxon>Eutheria</taxon>
        <taxon>Euarchontoglires</taxon>
        <taxon>Glires</taxon>
        <taxon>Lagomorpha</taxon>
        <taxon>Leporidae</taxon>
        <taxon>Oryctolagus</taxon>
    </lineage>
</organism>
<reference key="1">
    <citation type="journal article" date="1993" name="Biochem. J.">
        <title>Characterization of two novel casein transcripts in rabbit mammary gland.</title>
        <authorList>
            <person name="Dawson S.P."/>
            <person name="Wilde C.J."/>
            <person name="Tighe P.J."/>
            <person name="Mayer R.J."/>
        </authorList>
    </citation>
    <scope>NUCLEOTIDE SEQUENCE [MRNA]</scope>
    <source>
        <strain>New Zealand white</strain>
        <tissue>Mammary gland</tissue>
    </source>
</reference>
<evidence type="ECO:0000250" key="1">
    <source>
        <dbReference type="UniProtKB" id="P02663"/>
    </source>
</evidence>
<evidence type="ECO:0000255" key="2"/>
<evidence type="ECO:0000305" key="3"/>
<gene>
    <name type="primary">CSN1S2</name>
</gene>
<name>CASA2_RABIT</name>
<keyword id="KW-0494">Milk protein</keyword>
<keyword id="KW-0597">Phosphoprotein</keyword>
<keyword id="KW-1185">Reference proteome</keyword>
<keyword id="KW-0964">Secreted</keyword>
<keyword id="KW-0732">Signal</keyword>
<protein>
    <recommendedName>
        <fullName>Alpha-S2-casein</fullName>
    </recommendedName>
    <alternativeName>
        <fullName>Alpha-S2B-casein</fullName>
    </alternativeName>
</protein>
<accession>P50419</accession>
<feature type="signal peptide" evidence="2">
    <location>
        <begin position="1"/>
        <end position="15"/>
    </location>
</feature>
<feature type="chain" id="PRO_0000004456" description="Alpha-S2-casein">
    <location>
        <begin position="16"/>
        <end position="182"/>
    </location>
</feature>
<feature type="modified residue" description="Phosphoserine" evidence="1">
    <location>
        <position position="22"/>
    </location>
</feature>
<feature type="modified residue" description="Phosphoserine" evidence="1">
    <location>
        <position position="23"/>
    </location>
</feature>
<feature type="modified residue" description="Phosphoserine" evidence="1">
    <location>
        <position position="24"/>
    </location>
</feature>
<proteinExistence type="evidence at transcript level"/>